<comment type="function">
    <text evidence="1">Acts as a metalloprotease. Penetrates intact tissue and specifically cleaves the vesicle-associated membrane protein 2 (VAMP2) (part of the SNARE complex) involved in pancreatic secretion, thus disrupting the normal vesicular traffic (By similarity).</text>
</comment>
<comment type="cofactor">
    <cofactor evidence="1">
        <name>Zn(2+)</name>
        <dbReference type="ChEBI" id="CHEBI:29105"/>
    </cofactor>
    <text evidence="1">Binds 1 zinc ion per subunit.</text>
</comment>
<comment type="activity regulation">
    <text evidence="1">Inhibited by EDTA.</text>
</comment>
<comment type="subcellular location">
    <subcellularLocation>
        <location evidence="1">Secreted</location>
    </subcellularLocation>
</comment>
<comment type="tissue specificity">
    <text>Expressed by the venom gland.</text>
</comment>
<comment type="similarity">
    <text evidence="3">Belongs to the venom metalloproteinase (M12B) family.</text>
</comment>
<keyword id="KW-0106">Calcium</keyword>
<keyword id="KW-1015">Disulfide bond</keyword>
<keyword id="KW-0378">Hydrolase</keyword>
<keyword id="KW-0479">Metal-binding</keyword>
<keyword id="KW-0482">Metalloprotease</keyword>
<keyword id="KW-0645">Protease</keyword>
<keyword id="KW-0964">Secreted</keyword>
<keyword id="KW-0800">Toxin</keyword>
<keyword id="KW-0862">Zinc</keyword>
<proteinExistence type="evidence at transcript level"/>
<feature type="chain" id="PRO_0000429176" description="Venom metalloproteinase antarease-like TserMP_B">
    <location>
        <begin position="1"/>
        <end position="235" status="greater than"/>
    </location>
</feature>
<feature type="domain" description="Peptidase M12B" evidence="2">
    <location>
        <begin position="4"/>
        <end position="233"/>
    </location>
</feature>
<feature type="active site" evidence="2">
    <location>
        <position position="162"/>
    </location>
</feature>
<feature type="binding site" evidence="2">
    <location>
        <position position="161"/>
    </location>
    <ligand>
        <name>Zn(2+)</name>
        <dbReference type="ChEBI" id="CHEBI:29105"/>
        <note>catalytic</note>
    </ligand>
</feature>
<feature type="binding site" evidence="2">
    <location>
        <position position="165"/>
    </location>
    <ligand>
        <name>Zn(2+)</name>
        <dbReference type="ChEBI" id="CHEBI:29105"/>
        <note>catalytic</note>
    </ligand>
</feature>
<feature type="binding site" evidence="2">
    <location>
        <position position="171"/>
    </location>
    <ligand>
        <name>Zn(2+)</name>
        <dbReference type="ChEBI" id="CHEBI:29105"/>
        <note>catalytic</note>
    </ligand>
</feature>
<feature type="disulfide bond" evidence="2">
    <location>
        <begin position="137"/>
        <end position="228"/>
    </location>
</feature>
<feature type="non-terminal residue">
    <location>
        <position position="235"/>
    </location>
</feature>
<dbReference type="EC" id="3.4.24.-"/>
<dbReference type="EMBL" id="KC693036">
    <property type="protein sequence ID" value="AHE40589.1"/>
    <property type="molecule type" value="mRNA"/>
</dbReference>
<dbReference type="SMR" id="V9Z9A3"/>
<dbReference type="GO" id="GO:0005576">
    <property type="term" value="C:extracellular region"/>
    <property type="evidence" value="ECO:0007669"/>
    <property type="project" value="UniProtKB-SubCell"/>
</dbReference>
<dbReference type="GO" id="GO:0046872">
    <property type="term" value="F:metal ion binding"/>
    <property type="evidence" value="ECO:0007669"/>
    <property type="project" value="UniProtKB-KW"/>
</dbReference>
<dbReference type="GO" id="GO:0004222">
    <property type="term" value="F:metalloendopeptidase activity"/>
    <property type="evidence" value="ECO:0007669"/>
    <property type="project" value="InterPro"/>
</dbReference>
<dbReference type="GO" id="GO:0090729">
    <property type="term" value="F:toxin activity"/>
    <property type="evidence" value="ECO:0007669"/>
    <property type="project" value="UniProtKB-KW"/>
</dbReference>
<dbReference type="GO" id="GO:0006509">
    <property type="term" value="P:membrane protein ectodomain proteolysis"/>
    <property type="evidence" value="ECO:0007669"/>
    <property type="project" value="TreeGrafter"/>
</dbReference>
<dbReference type="Gene3D" id="3.40.390.10">
    <property type="entry name" value="Collagenase (Catalytic Domain)"/>
    <property type="match status" value="1"/>
</dbReference>
<dbReference type="InterPro" id="IPR024079">
    <property type="entry name" value="MetalloPept_cat_dom_sf"/>
</dbReference>
<dbReference type="InterPro" id="IPR001590">
    <property type="entry name" value="Peptidase_M12B"/>
</dbReference>
<dbReference type="PANTHER" id="PTHR11905">
    <property type="entry name" value="ADAM A DISINTEGRIN AND METALLOPROTEASE DOMAIN"/>
    <property type="match status" value="1"/>
</dbReference>
<dbReference type="PANTHER" id="PTHR11905:SF159">
    <property type="entry name" value="ADAM METALLOPROTEASE"/>
    <property type="match status" value="1"/>
</dbReference>
<dbReference type="Pfam" id="PF13688">
    <property type="entry name" value="Reprolysin_5"/>
    <property type="match status" value="1"/>
</dbReference>
<dbReference type="SUPFAM" id="SSF55486">
    <property type="entry name" value="Metalloproteases ('zincins'), catalytic domain"/>
    <property type="match status" value="1"/>
</dbReference>
<dbReference type="PROSITE" id="PS50215">
    <property type="entry name" value="ADAM_MEPRO"/>
    <property type="match status" value="1"/>
</dbReference>
<evidence type="ECO:0000250" key="1"/>
<evidence type="ECO:0000255" key="2">
    <source>
        <dbReference type="PROSITE-ProRule" id="PRU00276"/>
    </source>
</evidence>
<evidence type="ECO:0000305" key="3"/>
<name>VMPA2_TITSE</name>
<organism>
    <name type="scientific">Tityus serrulatus</name>
    <name type="common">Brazilian scorpion</name>
    <dbReference type="NCBI Taxonomy" id="6887"/>
    <lineage>
        <taxon>Eukaryota</taxon>
        <taxon>Metazoa</taxon>
        <taxon>Ecdysozoa</taxon>
        <taxon>Arthropoda</taxon>
        <taxon>Chelicerata</taxon>
        <taxon>Arachnida</taxon>
        <taxon>Scorpiones</taxon>
        <taxon>Buthida</taxon>
        <taxon>Buthoidea</taxon>
        <taxon>Buthidae</taxon>
        <taxon>Tityus</taxon>
    </lineage>
</organism>
<accession>V9Z9A3</accession>
<sequence>DDCIVVEYYIVTDSAFTKRFKSNSALTNYVTVMFTGVQNLMDTLELGIGVRLLGVTTFTEKTEPSFIKDNLIPGPPAAFDPDVLISAMSKYYCNHQTGLAKDTDLIFLITARGMGDPREDGTVDINTAGIANSAGVCKPCFKSGIATDDSDYNERVDTLAHESVHLLGSPHDGEGPNLVSLEGSPGAANCPAKAGYIMGNRNDKNKYKFSPCTKKCVEYLLSKPTASCIFQQCRD</sequence>
<reference key="1">
    <citation type="journal article" date="2014" name="Biochim. Biophys. Acta">
        <title>Antarease-like Zn-metalloproteases are ubiquitous in the venom of different scorpion genera.</title>
        <authorList>
            <person name="Ortiz E."/>
            <person name="Rendon-Anaya M."/>
            <person name="Rego S.C."/>
            <person name="Schwartz E.F."/>
            <person name="Possani L.D."/>
        </authorList>
    </citation>
    <scope>NUCLEOTIDE SEQUENCE [MRNA]</scope>
    <source>
        <tissue>Venom gland</tissue>
    </source>
</reference>
<protein>
    <recommendedName>
        <fullName>Venom metalloproteinase antarease-like TserMP_B</fullName>
        <shortName>VMPA</shortName>
        <ecNumber>3.4.24.-</ecNumber>
    </recommendedName>
</protein>